<dbReference type="EC" id="2.1.1.163" evidence="1"/>
<dbReference type="EC" id="2.1.1.201" evidence="1"/>
<dbReference type="EMBL" id="CP001019">
    <property type="protein sequence ID" value="ACJ19268.1"/>
    <property type="molecule type" value="Genomic_DNA"/>
</dbReference>
<dbReference type="RefSeq" id="WP_010958603.1">
    <property type="nucleotide sequence ID" value="NC_011527.1"/>
</dbReference>
<dbReference type="SMR" id="B6J3P6"/>
<dbReference type="KEGG" id="cbg:CbuG_2026"/>
<dbReference type="HOGENOM" id="CLU_037990_0_0_6"/>
<dbReference type="UniPathway" id="UPA00079">
    <property type="reaction ID" value="UER00169"/>
</dbReference>
<dbReference type="UniPathway" id="UPA00232"/>
<dbReference type="GO" id="GO:0008425">
    <property type="term" value="F:2-methoxy-6-polyprenyl-1,4-benzoquinol methyltransferase activity"/>
    <property type="evidence" value="ECO:0007669"/>
    <property type="project" value="UniProtKB-UniRule"/>
</dbReference>
<dbReference type="GO" id="GO:0043770">
    <property type="term" value="F:demethylmenaquinone methyltransferase activity"/>
    <property type="evidence" value="ECO:0007669"/>
    <property type="project" value="UniProtKB-UniRule"/>
</dbReference>
<dbReference type="GO" id="GO:0009060">
    <property type="term" value="P:aerobic respiration"/>
    <property type="evidence" value="ECO:0007669"/>
    <property type="project" value="UniProtKB-UniRule"/>
</dbReference>
<dbReference type="GO" id="GO:0009234">
    <property type="term" value="P:menaquinone biosynthetic process"/>
    <property type="evidence" value="ECO:0007669"/>
    <property type="project" value="UniProtKB-UniRule"/>
</dbReference>
<dbReference type="GO" id="GO:0032259">
    <property type="term" value="P:methylation"/>
    <property type="evidence" value="ECO:0007669"/>
    <property type="project" value="UniProtKB-KW"/>
</dbReference>
<dbReference type="CDD" id="cd02440">
    <property type="entry name" value="AdoMet_MTases"/>
    <property type="match status" value="1"/>
</dbReference>
<dbReference type="Gene3D" id="3.40.50.150">
    <property type="entry name" value="Vaccinia Virus protein VP39"/>
    <property type="match status" value="1"/>
</dbReference>
<dbReference type="HAMAP" id="MF_01813">
    <property type="entry name" value="MenG_UbiE_methyltr"/>
    <property type="match status" value="1"/>
</dbReference>
<dbReference type="InterPro" id="IPR029063">
    <property type="entry name" value="SAM-dependent_MTases_sf"/>
</dbReference>
<dbReference type="InterPro" id="IPR004033">
    <property type="entry name" value="UbiE/COQ5_MeTrFase"/>
</dbReference>
<dbReference type="InterPro" id="IPR023576">
    <property type="entry name" value="UbiE/COQ5_MeTrFase_CS"/>
</dbReference>
<dbReference type="NCBIfam" id="TIGR01934">
    <property type="entry name" value="MenG_MenH_UbiE"/>
    <property type="match status" value="1"/>
</dbReference>
<dbReference type="NCBIfam" id="NF001240">
    <property type="entry name" value="PRK00216.1-1"/>
    <property type="match status" value="1"/>
</dbReference>
<dbReference type="NCBIfam" id="NF001244">
    <property type="entry name" value="PRK00216.1-5"/>
    <property type="match status" value="1"/>
</dbReference>
<dbReference type="PANTHER" id="PTHR43591:SF24">
    <property type="entry name" value="2-METHOXY-6-POLYPRENYL-1,4-BENZOQUINOL METHYLASE, MITOCHONDRIAL"/>
    <property type="match status" value="1"/>
</dbReference>
<dbReference type="PANTHER" id="PTHR43591">
    <property type="entry name" value="METHYLTRANSFERASE"/>
    <property type="match status" value="1"/>
</dbReference>
<dbReference type="Pfam" id="PF01209">
    <property type="entry name" value="Ubie_methyltran"/>
    <property type="match status" value="1"/>
</dbReference>
<dbReference type="SUPFAM" id="SSF53335">
    <property type="entry name" value="S-adenosyl-L-methionine-dependent methyltransferases"/>
    <property type="match status" value="1"/>
</dbReference>
<dbReference type="PROSITE" id="PS51608">
    <property type="entry name" value="SAM_MT_UBIE"/>
    <property type="match status" value="1"/>
</dbReference>
<dbReference type="PROSITE" id="PS01183">
    <property type="entry name" value="UBIE_1"/>
    <property type="match status" value="1"/>
</dbReference>
<dbReference type="PROSITE" id="PS01184">
    <property type="entry name" value="UBIE_2"/>
    <property type="match status" value="1"/>
</dbReference>
<sequence>MNETEKSTHFGYQTVPTDQKTDKVKHVFESVAAKYDLMNDLMSLGIHRWWKDFAITQCRLRTGQRILDLAGGTGDLAKRISPLVGDEGEVVIADINAAMLNVGRRRLLDQGIFRNIQFIQADAEKLPFPNNFFDRIVIGFGLRNVTNQLAALQSMHRVIKPGGFVVILEFSKPTLAPLKAVYDAYSFQLLPRLGKLVAKDEESYRYLVESIRMHPDQEALLSKMTDAGFEDCDYHNLSGGIVAVHRGYKF</sequence>
<comment type="function">
    <text evidence="1">Methyltransferase required for the conversion of demethylmenaquinol (DMKH2) to menaquinol (MKH2) and the conversion of 2-polyprenyl-6-methoxy-1,4-benzoquinol (DDMQH2) to 2-polyprenyl-3-methyl-6-methoxy-1,4-benzoquinol (DMQH2).</text>
</comment>
<comment type="catalytic activity">
    <reaction evidence="1">
        <text>a 2-demethylmenaquinol + S-adenosyl-L-methionine = a menaquinol + S-adenosyl-L-homocysteine + H(+)</text>
        <dbReference type="Rhea" id="RHEA:42640"/>
        <dbReference type="Rhea" id="RHEA-COMP:9539"/>
        <dbReference type="Rhea" id="RHEA-COMP:9563"/>
        <dbReference type="ChEBI" id="CHEBI:15378"/>
        <dbReference type="ChEBI" id="CHEBI:18151"/>
        <dbReference type="ChEBI" id="CHEBI:55437"/>
        <dbReference type="ChEBI" id="CHEBI:57856"/>
        <dbReference type="ChEBI" id="CHEBI:59789"/>
        <dbReference type="EC" id="2.1.1.163"/>
    </reaction>
</comment>
<comment type="catalytic activity">
    <reaction evidence="1">
        <text>a 2-methoxy-6-(all-trans-polyprenyl)benzene-1,4-diol + S-adenosyl-L-methionine = a 5-methoxy-2-methyl-3-(all-trans-polyprenyl)benzene-1,4-diol + S-adenosyl-L-homocysteine + H(+)</text>
        <dbReference type="Rhea" id="RHEA:28286"/>
        <dbReference type="Rhea" id="RHEA-COMP:10858"/>
        <dbReference type="Rhea" id="RHEA-COMP:10859"/>
        <dbReference type="ChEBI" id="CHEBI:15378"/>
        <dbReference type="ChEBI" id="CHEBI:57856"/>
        <dbReference type="ChEBI" id="CHEBI:59789"/>
        <dbReference type="ChEBI" id="CHEBI:84166"/>
        <dbReference type="ChEBI" id="CHEBI:84167"/>
        <dbReference type="EC" id="2.1.1.201"/>
    </reaction>
</comment>
<comment type="pathway">
    <text evidence="1">Quinol/quinone metabolism; menaquinone biosynthesis; menaquinol from 1,4-dihydroxy-2-naphthoate: step 2/2.</text>
</comment>
<comment type="pathway">
    <text evidence="1">Cofactor biosynthesis; ubiquinone biosynthesis.</text>
</comment>
<comment type="similarity">
    <text evidence="1">Belongs to the class I-like SAM-binding methyltransferase superfamily. MenG/UbiE family.</text>
</comment>
<evidence type="ECO:0000255" key="1">
    <source>
        <dbReference type="HAMAP-Rule" id="MF_01813"/>
    </source>
</evidence>
<proteinExistence type="inferred from homology"/>
<gene>
    <name evidence="1" type="primary">ubiE</name>
    <name type="ordered locus">CbuG_2026</name>
</gene>
<reference key="1">
    <citation type="journal article" date="2009" name="Infect. Immun.">
        <title>Comparative genomics reveal extensive transposon-mediated genomic plasticity and diversity among potential effector proteins within the genus Coxiella.</title>
        <authorList>
            <person name="Beare P.A."/>
            <person name="Unsworth N."/>
            <person name="Andoh M."/>
            <person name="Voth D.E."/>
            <person name="Omsland A."/>
            <person name="Gilk S.D."/>
            <person name="Williams K.P."/>
            <person name="Sobral B.W."/>
            <person name="Kupko J.J. III"/>
            <person name="Porcella S.F."/>
            <person name="Samuel J.E."/>
            <person name="Heinzen R.A."/>
        </authorList>
    </citation>
    <scope>NUCLEOTIDE SEQUENCE [LARGE SCALE GENOMIC DNA]</scope>
    <source>
        <strain>CbuG_Q212</strain>
    </source>
</reference>
<organism>
    <name type="scientific">Coxiella burnetii (strain CbuG_Q212)</name>
    <name type="common">Coxiella burnetii (strain Q212)</name>
    <dbReference type="NCBI Taxonomy" id="434923"/>
    <lineage>
        <taxon>Bacteria</taxon>
        <taxon>Pseudomonadati</taxon>
        <taxon>Pseudomonadota</taxon>
        <taxon>Gammaproteobacteria</taxon>
        <taxon>Legionellales</taxon>
        <taxon>Coxiellaceae</taxon>
        <taxon>Coxiella</taxon>
    </lineage>
</organism>
<accession>B6J3P6</accession>
<name>UBIE_COXB2</name>
<feature type="chain" id="PRO_1000187750" description="Ubiquinone/menaquinone biosynthesis C-methyltransferase UbiE">
    <location>
        <begin position="1"/>
        <end position="250"/>
    </location>
</feature>
<feature type="binding site" evidence="1">
    <location>
        <position position="73"/>
    </location>
    <ligand>
        <name>S-adenosyl-L-methionine</name>
        <dbReference type="ChEBI" id="CHEBI:59789"/>
    </ligand>
</feature>
<feature type="binding site" evidence="1">
    <location>
        <position position="94"/>
    </location>
    <ligand>
        <name>S-adenosyl-L-methionine</name>
        <dbReference type="ChEBI" id="CHEBI:59789"/>
    </ligand>
</feature>
<feature type="binding site" evidence="1">
    <location>
        <begin position="122"/>
        <end position="123"/>
    </location>
    <ligand>
        <name>S-adenosyl-L-methionine</name>
        <dbReference type="ChEBI" id="CHEBI:59789"/>
    </ligand>
</feature>
<keyword id="KW-0474">Menaquinone biosynthesis</keyword>
<keyword id="KW-0489">Methyltransferase</keyword>
<keyword id="KW-0949">S-adenosyl-L-methionine</keyword>
<keyword id="KW-0808">Transferase</keyword>
<keyword id="KW-0831">Ubiquinone biosynthesis</keyword>
<protein>
    <recommendedName>
        <fullName evidence="1">Ubiquinone/menaquinone biosynthesis C-methyltransferase UbiE</fullName>
        <ecNumber evidence="1">2.1.1.163</ecNumber>
        <ecNumber evidence="1">2.1.1.201</ecNumber>
    </recommendedName>
    <alternativeName>
        <fullName evidence="1">2-methoxy-6-polyprenyl-1,4-benzoquinol methylase</fullName>
    </alternativeName>
    <alternativeName>
        <fullName evidence="1">Demethylmenaquinone methyltransferase</fullName>
    </alternativeName>
</protein>